<comment type="function">
    <text evidence="1">Essential component of the TIM23 complex, a complex that mediates the translocation of transit peptide-containing proteins across the mitochondrial inner membrane. Required to direct preproteins in transit and direct them to the channel protein TIM23, and possibly facilitates transfer of the translocating proteins from the TOM complex to the TIM23 complex (By similarity).</text>
</comment>
<comment type="subunit">
    <text evidence="1">Component of the TIM23 complex, at least composed of TIM23/timX, TIM17/timQ, tim50 and TIM21/timU. Interacts with preproteins in transit (By similarity).</text>
</comment>
<comment type="subcellular location">
    <subcellularLocation>
        <location evidence="1">Mitochondrion inner membrane</location>
        <topology evidence="1">Single-pass membrane protein</topology>
    </subcellularLocation>
</comment>
<comment type="similarity">
    <text evidence="5">Belongs to the TIM50 family.</text>
</comment>
<accession>Q5B4P0</accession>
<accession>C8V8E4</accession>
<evidence type="ECO:0000250" key="1"/>
<evidence type="ECO:0000255" key="2"/>
<evidence type="ECO:0000255" key="3">
    <source>
        <dbReference type="PROSITE-ProRule" id="PRU00336"/>
    </source>
</evidence>
<evidence type="ECO:0000256" key="4">
    <source>
        <dbReference type="SAM" id="MobiDB-lite"/>
    </source>
</evidence>
<evidence type="ECO:0000305" key="5"/>
<organism>
    <name type="scientific">Emericella nidulans (strain FGSC A4 / ATCC 38163 / CBS 112.46 / NRRL 194 / M139)</name>
    <name type="common">Aspergillus nidulans</name>
    <dbReference type="NCBI Taxonomy" id="227321"/>
    <lineage>
        <taxon>Eukaryota</taxon>
        <taxon>Fungi</taxon>
        <taxon>Dikarya</taxon>
        <taxon>Ascomycota</taxon>
        <taxon>Pezizomycotina</taxon>
        <taxon>Eurotiomycetes</taxon>
        <taxon>Eurotiomycetidae</taxon>
        <taxon>Eurotiales</taxon>
        <taxon>Aspergillaceae</taxon>
        <taxon>Aspergillus</taxon>
        <taxon>Aspergillus subgen. Nidulantes</taxon>
    </lineage>
</organism>
<reference key="1">
    <citation type="journal article" date="2005" name="Nature">
        <title>Sequencing of Aspergillus nidulans and comparative analysis with A. fumigatus and A. oryzae.</title>
        <authorList>
            <person name="Galagan J.E."/>
            <person name="Calvo S.E."/>
            <person name="Cuomo C."/>
            <person name="Ma L.-J."/>
            <person name="Wortman J.R."/>
            <person name="Batzoglou S."/>
            <person name="Lee S.-I."/>
            <person name="Bastuerkmen M."/>
            <person name="Spevak C.C."/>
            <person name="Clutterbuck J."/>
            <person name="Kapitonov V."/>
            <person name="Jurka J."/>
            <person name="Scazzocchio C."/>
            <person name="Farman M.L."/>
            <person name="Butler J."/>
            <person name="Purcell S."/>
            <person name="Harris S."/>
            <person name="Braus G.H."/>
            <person name="Draht O."/>
            <person name="Busch S."/>
            <person name="D'Enfert C."/>
            <person name="Bouchier C."/>
            <person name="Goldman G.H."/>
            <person name="Bell-Pedersen D."/>
            <person name="Griffiths-Jones S."/>
            <person name="Doonan J.H."/>
            <person name="Yu J."/>
            <person name="Vienken K."/>
            <person name="Pain A."/>
            <person name="Freitag M."/>
            <person name="Selker E.U."/>
            <person name="Archer D.B."/>
            <person name="Penalva M.A."/>
            <person name="Oakley B.R."/>
            <person name="Momany M."/>
            <person name="Tanaka T."/>
            <person name="Kumagai T."/>
            <person name="Asai K."/>
            <person name="Machida M."/>
            <person name="Nierman W.C."/>
            <person name="Denning D.W."/>
            <person name="Caddick M.X."/>
            <person name="Hynes M."/>
            <person name="Paoletti M."/>
            <person name="Fischer R."/>
            <person name="Miller B.L."/>
            <person name="Dyer P.S."/>
            <person name="Sachs M.S."/>
            <person name="Osmani S.A."/>
            <person name="Birren B.W."/>
        </authorList>
    </citation>
    <scope>NUCLEOTIDE SEQUENCE [LARGE SCALE GENOMIC DNA]</scope>
    <source>
        <strain>FGSC A4 / ATCC 38163 / CBS 112.46 / NRRL 194 / M139</strain>
    </source>
</reference>
<reference key="2">
    <citation type="journal article" date="2009" name="Fungal Genet. Biol.">
        <title>The 2008 update of the Aspergillus nidulans genome annotation: a community effort.</title>
        <authorList>
            <person name="Wortman J.R."/>
            <person name="Gilsenan J.M."/>
            <person name="Joardar V."/>
            <person name="Deegan J."/>
            <person name="Clutterbuck J."/>
            <person name="Andersen M.R."/>
            <person name="Archer D."/>
            <person name="Bencina M."/>
            <person name="Braus G."/>
            <person name="Coutinho P."/>
            <person name="von Dohren H."/>
            <person name="Doonan J."/>
            <person name="Driessen A.J."/>
            <person name="Durek P."/>
            <person name="Espeso E."/>
            <person name="Fekete E."/>
            <person name="Flipphi M."/>
            <person name="Estrada C.G."/>
            <person name="Geysens S."/>
            <person name="Goldman G."/>
            <person name="de Groot P.W."/>
            <person name="Hansen K."/>
            <person name="Harris S.D."/>
            <person name="Heinekamp T."/>
            <person name="Helmstaedt K."/>
            <person name="Henrissat B."/>
            <person name="Hofmann G."/>
            <person name="Homan T."/>
            <person name="Horio T."/>
            <person name="Horiuchi H."/>
            <person name="James S."/>
            <person name="Jones M."/>
            <person name="Karaffa L."/>
            <person name="Karanyi Z."/>
            <person name="Kato M."/>
            <person name="Keller N."/>
            <person name="Kelly D.E."/>
            <person name="Kiel J.A."/>
            <person name="Kim J.M."/>
            <person name="van der Klei I.J."/>
            <person name="Klis F.M."/>
            <person name="Kovalchuk A."/>
            <person name="Krasevec N."/>
            <person name="Kubicek C.P."/>
            <person name="Liu B."/>
            <person name="Maccabe A."/>
            <person name="Meyer V."/>
            <person name="Mirabito P."/>
            <person name="Miskei M."/>
            <person name="Mos M."/>
            <person name="Mullins J."/>
            <person name="Nelson D.R."/>
            <person name="Nielsen J."/>
            <person name="Oakley B.R."/>
            <person name="Osmani S.A."/>
            <person name="Pakula T."/>
            <person name="Paszewski A."/>
            <person name="Paulsen I."/>
            <person name="Pilsyk S."/>
            <person name="Pocsi I."/>
            <person name="Punt P.J."/>
            <person name="Ram A.F."/>
            <person name="Ren Q."/>
            <person name="Robellet X."/>
            <person name="Robson G."/>
            <person name="Seiboth B."/>
            <person name="van Solingen P."/>
            <person name="Specht T."/>
            <person name="Sun J."/>
            <person name="Taheri-Talesh N."/>
            <person name="Takeshita N."/>
            <person name="Ussery D."/>
            <person name="vanKuyk P.A."/>
            <person name="Visser H."/>
            <person name="van de Vondervoort P.J."/>
            <person name="de Vries R.P."/>
            <person name="Walton J."/>
            <person name="Xiang X."/>
            <person name="Xiong Y."/>
            <person name="Zeng A.P."/>
            <person name="Brandt B.W."/>
            <person name="Cornell M.J."/>
            <person name="van den Hondel C.A."/>
            <person name="Visser J."/>
            <person name="Oliver S.G."/>
            <person name="Turner G."/>
        </authorList>
    </citation>
    <scope>GENOME REANNOTATION</scope>
    <source>
        <strain>FGSC A4 / ATCC 38163 / CBS 112.46 / NRRL 194 / M139</strain>
    </source>
</reference>
<dbReference type="EMBL" id="AACD01000078">
    <property type="protein sequence ID" value="EAA60833.1"/>
    <property type="molecule type" value="Genomic_DNA"/>
</dbReference>
<dbReference type="EMBL" id="BN001303">
    <property type="protein sequence ID" value="CBF77402.1"/>
    <property type="molecule type" value="Genomic_DNA"/>
</dbReference>
<dbReference type="RefSeq" id="XP_662094.1">
    <property type="nucleotide sequence ID" value="XM_657002.1"/>
</dbReference>
<dbReference type="SMR" id="Q5B4P0"/>
<dbReference type="FunCoup" id="Q5B4P0">
    <property type="interactions" value="443"/>
</dbReference>
<dbReference type="STRING" id="227321.Q5B4P0"/>
<dbReference type="EnsemblFungi" id="CBF77402">
    <property type="protein sequence ID" value="CBF77402"/>
    <property type="gene ID" value="ANIA_04490"/>
</dbReference>
<dbReference type="KEGG" id="ani:ANIA_04490"/>
<dbReference type="VEuPathDB" id="FungiDB:AN4490"/>
<dbReference type="eggNOG" id="KOG2832">
    <property type="taxonomic scope" value="Eukaryota"/>
</dbReference>
<dbReference type="HOGENOM" id="CLU_023309_0_0_1"/>
<dbReference type="InParanoid" id="Q5B4P0"/>
<dbReference type="OMA" id="NLRQPYT"/>
<dbReference type="OrthoDB" id="287041at2759"/>
<dbReference type="Proteomes" id="UP000000560">
    <property type="component" value="Chromosome III"/>
</dbReference>
<dbReference type="GO" id="GO:0005744">
    <property type="term" value="C:TIM23 mitochondrial import inner membrane translocase complex"/>
    <property type="evidence" value="ECO:0000318"/>
    <property type="project" value="GO_Central"/>
</dbReference>
<dbReference type="GO" id="GO:0042802">
    <property type="term" value="F:identical protein binding"/>
    <property type="evidence" value="ECO:0007669"/>
    <property type="project" value="EnsemblFungi"/>
</dbReference>
<dbReference type="GO" id="GO:0030943">
    <property type="term" value="F:mitochondrion targeting sequence binding"/>
    <property type="evidence" value="ECO:0007669"/>
    <property type="project" value="EnsemblFungi"/>
</dbReference>
<dbReference type="GO" id="GO:0008320">
    <property type="term" value="F:protein transmembrane transporter activity"/>
    <property type="evidence" value="ECO:0007669"/>
    <property type="project" value="EnsemblFungi"/>
</dbReference>
<dbReference type="GO" id="GO:0030150">
    <property type="term" value="P:protein import into mitochondrial matrix"/>
    <property type="evidence" value="ECO:0000318"/>
    <property type="project" value="GO_Central"/>
</dbReference>
<dbReference type="GO" id="GO:0046902">
    <property type="term" value="P:regulation of mitochondrial membrane permeability"/>
    <property type="evidence" value="ECO:0007669"/>
    <property type="project" value="EnsemblFungi"/>
</dbReference>
<dbReference type="CDD" id="cd07521">
    <property type="entry name" value="HAD_FCP1-like"/>
    <property type="match status" value="1"/>
</dbReference>
<dbReference type="FunFam" id="3.40.50.1000:FF:000019">
    <property type="entry name" value="Mitochondrial import inner membrane translocase subunit TIM50"/>
    <property type="match status" value="1"/>
</dbReference>
<dbReference type="Gene3D" id="3.40.50.1000">
    <property type="entry name" value="HAD superfamily/HAD-like"/>
    <property type="match status" value="1"/>
</dbReference>
<dbReference type="InterPro" id="IPR004274">
    <property type="entry name" value="FCP1_dom"/>
</dbReference>
<dbReference type="InterPro" id="IPR036412">
    <property type="entry name" value="HAD-like_sf"/>
</dbReference>
<dbReference type="InterPro" id="IPR023214">
    <property type="entry name" value="HAD_sf"/>
</dbReference>
<dbReference type="InterPro" id="IPR050365">
    <property type="entry name" value="TIM50"/>
</dbReference>
<dbReference type="PANTHER" id="PTHR12210">
    <property type="entry name" value="DULLARD PROTEIN PHOSPHATASE"/>
    <property type="match status" value="1"/>
</dbReference>
<dbReference type="Pfam" id="PF03031">
    <property type="entry name" value="NIF"/>
    <property type="match status" value="1"/>
</dbReference>
<dbReference type="SMART" id="SM00577">
    <property type="entry name" value="CPDc"/>
    <property type="match status" value="1"/>
</dbReference>
<dbReference type="SUPFAM" id="SSF56784">
    <property type="entry name" value="HAD-like"/>
    <property type="match status" value="1"/>
</dbReference>
<dbReference type="PROSITE" id="PS50969">
    <property type="entry name" value="FCP1"/>
    <property type="match status" value="1"/>
</dbReference>
<name>TIM50_EMENI</name>
<keyword id="KW-0472">Membrane</keyword>
<keyword id="KW-0496">Mitochondrion</keyword>
<keyword id="KW-0999">Mitochondrion inner membrane</keyword>
<keyword id="KW-0653">Protein transport</keyword>
<keyword id="KW-1185">Reference proteome</keyword>
<keyword id="KW-0809">Transit peptide</keyword>
<keyword id="KW-0811">Translocation</keyword>
<keyword id="KW-0812">Transmembrane</keyword>
<keyword id="KW-1133">Transmembrane helix</keyword>
<keyword id="KW-0813">Transport</keyword>
<gene>
    <name type="primary">tim50</name>
    <name type="ORF">AN4490</name>
</gene>
<proteinExistence type="inferred from homology"/>
<protein>
    <recommendedName>
        <fullName>Mitochondrial import inner membrane translocase subunit tim50</fullName>
    </recommendedName>
</protein>
<feature type="transit peptide" description="Mitochondrion" evidence="2">
    <location>
        <begin position="1"/>
        <end position="32"/>
    </location>
</feature>
<feature type="chain" id="PRO_0000043131" description="Mitochondrial import inner membrane translocase subunit tim50">
    <location>
        <begin position="33"/>
        <end position="532"/>
    </location>
</feature>
<feature type="topological domain" description="Mitochondrial matrix" evidence="2">
    <location>
        <begin position="33"/>
        <end position="175"/>
    </location>
</feature>
<feature type="transmembrane region" description="Helical" evidence="2">
    <location>
        <begin position="176"/>
        <end position="193"/>
    </location>
</feature>
<feature type="topological domain" description="Mitochondrial intermembrane" evidence="2">
    <location>
        <begin position="194"/>
        <end position="532"/>
    </location>
</feature>
<feature type="domain" description="FCP1 homology" evidence="3">
    <location>
        <begin position="247"/>
        <end position="390"/>
    </location>
</feature>
<feature type="region of interest" description="Disordered" evidence="4">
    <location>
        <begin position="26"/>
        <end position="163"/>
    </location>
</feature>
<feature type="compositionally biased region" description="Low complexity" evidence="4">
    <location>
        <begin position="61"/>
        <end position="106"/>
    </location>
</feature>
<feature type="compositionally biased region" description="Polar residues" evidence="4">
    <location>
        <begin position="131"/>
        <end position="140"/>
    </location>
</feature>
<feature type="compositionally biased region" description="Basic and acidic residues" evidence="4">
    <location>
        <begin position="141"/>
        <end position="157"/>
    </location>
</feature>
<sequence length="532" mass="60251">MLRRAILPLTRPSGLVSAPRLSALPVSHSRCYAKGSKPKTPYKLPESVKSSKPEQPAKPSQQEQYAAEQAEFETTSDPQANTANTTSQASSSPESSPSQSEQDAPQRPLPDLTQGIPSTLAAELEARSKKSGSGTLNLTEDPSRFEEDYSDDGRGDIPKGGYESSLDRKRARMAKLMYALFLLGSVGGMAYLGRNWDTVEEENAHPDVPSGWSFGLWYNRIKARMGDFTSYYKDPAFPKLLPDEDPNLRQPYTLVLSLEDLLVHSEWSREHGWRVAKRPGVDYFLRYLNQYYELVLFTSVPSMMADQVLRKLDPYRIIRWPLFREATRYKDGEYIKDLSYLNRDLSKVILIDTKEEHARLQPENAIILDKWNGNPKDKTLVALIPFLEYLAGMGVDDVRTVLKSFEGQSIPIEFAKREKAMRERFEKELAEEQKKRPRSGMGSLASALGLKSSARTLDGEQLPSAGLQEGKMLWDQIRERGQKNYELIEKEIRENGEKWLAEMAAEEEKLRQEQMESMKGSLTGFFGGGKKE</sequence>